<feature type="chain" id="PRO_0000452378" description="Ent-copalyl diphosphate synthase 1">
    <location>
        <begin position="1"/>
        <end position="711"/>
    </location>
</feature>
<feature type="short sequence motif" description="DXDD motif" evidence="2">
    <location>
        <begin position="277"/>
        <end position="280"/>
    </location>
</feature>
<feature type="binding site" evidence="3">
    <location>
        <position position="145"/>
    </location>
    <ligand>
        <name>substrate</name>
    </ligand>
</feature>
<feature type="binding site" evidence="1">
    <location>
        <position position="277"/>
    </location>
    <ligand>
        <name>Mg(2+)</name>
        <dbReference type="ChEBI" id="CHEBI:18420"/>
    </ligand>
</feature>
<feature type="binding site" evidence="1">
    <location>
        <position position="279"/>
    </location>
    <ligand>
        <name>Mg(2+)</name>
        <dbReference type="ChEBI" id="CHEBI:18420"/>
    </ligand>
</feature>
<feature type="binding site" evidence="3">
    <location>
        <position position="364"/>
    </location>
    <ligand>
        <name>substrate</name>
    </ligand>
</feature>
<evidence type="ECO:0000250" key="1">
    <source>
        <dbReference type="UniProtKB" id="C7BKP9"/>
    </source>
</evidence>
<evidence type="ECO:0000250" key="2">
    <source>
        <dbReference type="UniProtKB" id="G3E4M6"/>
    </source>
</evidence>
<evidence type="ECO:0000250" key="3">
    <source>
        <dbReference type="UniProtKB" id="Q38802"/>
    </source>
</evidence>
<evidence type="ECO:0000250" key="4">
    <source>
        <dbReference type="UniProtKB" id="Q40577"/>
    </source>
</evidence>
<evidence type="ECO:0000303" key="5">
    <source ref="1"/>
</evidence>
<evidence type="ECO:0000305" key="6"/>
<accession>A0A5P8DI15</accession>
<name>CPS1_ISOJA</name>
<keyword id="KW-0413">Isomerase</keyword>
<keyword id="KW-0460">Magnesium</keyword>
<keyword id="KW-0479">Metal-binding</keyword>
<protein>
    <recommendedName>
        <fullName evidence="5">Ent-copalyl diphosphate synthase 1</fullName>
        <shortName evidence="5">IjCPS1</shortName>
        <ecNumber evidence="2">5.5.1.13</ecNumber>
    </recommendedName>
</protein>
<organism>
    <name type="scientific">Isodon japonicus</name>
    <name type="common">Scutellaria japonica</name>
    <dbReference type="NCBI Taxonomy" id="425908"/>
    <lineage>
        <taxon>Eukaryota</taxon>
        <taxon>Viridiplantae</taxon>
        <taxon>Streptophyta</taxon>
        <taxon>Embryophyta</taxon>
        <taxon>Tracheophyta</taxon>
        <taxon>Spermatophyta</taxon>
        <taxon>Magnoliopsida</taxon>
        <taxon>eudicotyledons</taxon>
        <taxon>Gunneridae</taxon>
        <taxon>Pentapetalae</taxon>
        <taxon>asterids</taxon>
        <taxon>lamiids</taxon>
        <taxon>Lamiales</taxon>
        <taxon>Lamiaceae</taxon>
        <taxon>Nepetoideae</taxon>
        <taxon>Ocimeae</taxon>
        <taxon>Isodoninae</taxon>
        <taxon>Isodon</taxon>
    </lineage>
</organism>
<dbReference type="EC" id="5.5.1.13" evidence="2"/>
<dbReference type="EMBL" id="MK043033">
    <property type="protein sequence ID" value="QFP98577.1"/>
    <property type="molecule type" value="mRNA"/>
</dbReference>
<dbReference type="SMR" id="A0A5P8DI15"/>
<dbReference type="UniPathway" id="UPA00213"/>
<dbReference type="GO" id="GO:0009507">
    <property type="term" value="C:chloroplast"/>
    <property type="evidence" value="ECO:0007669"/>
    <property type="project" value="TreeGrafter"/>
</dbReference>
<dbReference type="GO" id="GO:0009905">
    <property type="term" value="F:ent-copalyl diphosphate synthase activity"/>
    <property type="evidence" value="ECO:0000250"/>
    <property type="project" value="UniProtKB"/>
</dbReference>
<dbReference type="GO" id="GO:0000287">
    <property type="term" value="F:magnesium ion binding"/>
    <property type="evidence" value="ECO:0007669"/>
    <property type="project" value="TreeGrafter"/>
</dbReference>
<dbReference type="GO" id="GO:0010333">
    <property type="term" value="F:terpene synthase activity"/>
    <property type="evidence" value="ECO:0007669"/>
    <property type="project" value="InterPro"/>
</dbReference>
<dbReference type="GO" id="GO:0009686">
    <property type="term" value="P:gibberellin biosynthetic process"/>
    <property type="evidence" value="ECO:0007669"/>
    <property type="project" value="TreeGrafter"/>
</dbReference>
<dbReference type="GO" id="GO:1901946">
    <property type="term" value="P:miltiradiene biosynthetic process"/>
    <property type="evidence" value="ECO:0000250"/>
    <property type="project" value="UniProtKB"/>
</dbReference>
<dbReference type="GO" id="GO:0016114">
    <property type="term" value="P:terpenoid biosynthetic process"/>
    <property type="evidence" value="ECO:0000250"/>
    <property type="project" value="UniProtKB"/>
</dbReference>
<dbReference type="CDD" id="cd00684">
    <property type="entry name" value="Terpene_cyclase_plant_C1"/>
    <property type="match status" value="1"/>
</dbReference>
<dbReference type="FunFam" id="1.50.10.160:FF:000001">
    <property type="entry name" value="Ent-copalyl diphosphate synthase"/>
    <property type="match status" value="1"/>
</dbReference>
<dbReference type="FunFam" id="1.50.10.130:FF:000002">
    <property type="entry name" value="Ent-copalyl diphosphate synthase, chloroplastic"/>
    <property type="match status" value="1"/>
</dbReference>
<dbReference type="Gene3D" id="1.50.10.160">
    <property type="match status" value="1"/>
</dbReference>
<dbReference type="Gene3D" id="1.10.600.10">
    <property type="entry name" value="Farnesyl Diphosphate Synthase"/>
    <property type="match status" value="1"/>
</dbReference>
<dbReference type="Gene3D" id="1.50.10.130">
    <property type="entry name" value="Terpene synthase, N-terminal domain"/>
    <property type="match status" value="1"/>
</dbReference>
<dbReference type="InterPro" id="IPR008949">
    <property type="entry name" value="Isoprenoid_synthase_dom_sf"/>
</dbReference>
<dbReference type="InterPro" id="IPR044814">
    <property type="entry name" value="Terpene_cyclase_plant_C1"/>
</dbReference>
<dbReference type="InterPro" id="IPR001906">
    <property type="entry name" value="Terpene_synth_N"/>
</dbReference>
<dbReference type="InterPro" id="IPR036965">
    <property type="entry name" value="Terpene_synth_N_sf"/>
</dbReference>
<dbReference type="InterPro" id="IPR050148">
    <property type="entry name" value="Terpene_synthase-like"/>
</dbReference>
<dbReference type="InterPro" id="IPR008930">
    <property type="entry name" value="Terpenoid_cyclase/PrenylTrfase"/>
</dbReference>
<dbReference type="PANTHER" id="PTHR31739">
    <property type="entry name" value="ENT-COPALYL DIPHOSPHATE SYNTHASE, CHLOROPLASTIC"/>
    <property type="match status" value="1"/>
</dbReference>
<dbReference type="PANTHER" id="PTHR31739:SF4">
    <property type="entry name" value="ENT-COPALYL DIPHOSPHATE SYNTHASE, CHLOROPLASTIC"/>
    <property type="match status" value="1"/>
</dbReference>
<dbReference type="Pfam" id="PF01397">
    <property type="entry name" value="Terpene_synth"/>
    <property type="match status" value="1"/>
</dbReference>
<dbReference type="SFLD" id="SFLDG01014">
    <property type="entry name" value="Terpene_Cyclase_Like_1_N-term"/>
    <property type="match status" value="1"/>
</dbReference>
<dbReference type="SFLD" id="SFLDG01605">
    <property type="entry name" value="Terpene_Cyclase_Like_1_N-term"/>
    <property type="match status" value="1"/>
</dbReference>
<dbReference type="SUPFAM" id="SSF48239">
    <property type="entry name" value="Terpenoid cyclases/Protein prenyltransferases"/>
    <property type="match status" value="2"/>
</dbReference>
<dbReference type="SUPFAM" id="SSF48576">
    <property type="entry name" value="Terpenoid synthases"/>
    <property type="match status" value="1"/>
</dbReference>
<comment type="function">
    <text evidence="2">Involved in the biosynthesis of ent-kaurene diterpenoids natural products such as oridonin, miltiradiene, eriocalyxin B and nezukol, known to exhibit antitumor, anti-inflammatory and antibacterial activities (By similarity). Catalyzes the conversion of (2E,6E,10E)-geranylgeranyl diphosphate (GGPP) to ent-copalyl diphosphate (ent-CPP) (By similarity).</text>
</comment>
<comment type="catalytic activity">
    <reaction evidence="2">
        <text>(2E,6E,10E)-geranylgeranyl diphosphate = ent-copalyl diphosphate</text>
        <dbReference type="Rhea" id="RHEA:14841"/>
        <dbReference type="ChEBI" id="CHEBI:58553"/>
        <dbReference type="ChEBI" id="CHEBI:58756"/>
        <dbReference type="EC" id="5.5.1.13"/>
    </reaction>
    <physiologicalReaction direction="left-to-right" evidence="2">
        <dbReference type="Rhea" id="RHEA:14842"/>
    </physiologicalReaction>
</comment>
<comment type="cofactor">
    <cofactor evidence="4">
        <name>Mg(2+)</name>
        <dbReference type="ChEBI" id="CHEBI:18420"/>
    </cofactor>
</comment>
<comment type="pathway">
    <text evidence="2">Secondary metabolite biosynthesis; terpenoid biosynthesis.</text>
</comment>
<comment type="domain">
    <text evidence="6">The Asp-Xaa-Asp-Asp (DXDD) motif is important for the catalytic activity, presumably through binding to Mg(2+).</text>
</comment>
<comment type="similarity">
    <text evidence="6">Belongs to the terpene synthase family. Tpsc subfamily.</text>
</comment>
<proteinExistence type="evidence at transcript level"/>
<gene>
    <name evidence="5" type="primary">CPS1</name>
</gene>
<reference key="1">
    <citation type="submission" date="2018-10" db="EMBL/GenBank/DDBJ databases">
        <authorList>
            <person name="Ide Y."/>
            <person name="Yamamura Y."/>
            <person name="Lee J.-B."/>
        </authorList>
    </citation>
    <scope>NUCLEOTIDE SEQUENCE [MRNA]</scope>
</reference>
<sequence>MLQSMGDGEISISPYDTAWVALVEDDGGGRRQPQFPSSLEWISSNQLADGSWGDAGTFSIFDRILNTLACVVALRSWNIHPHKTEKGIWFMKKNMCRIDEENLEHMPIGFEVALPSLIDIAKKLGIDIPTQTRGLQEIYARREIKLKKIPRDIMHQAPTTLLHSLEGMAGLKWEKLLKLQSEDGSFLFSPASTAFALQQTRDHNCLKYLTNHIHKFNGGVPNVYPVDLFEHLWAVDRLQRLGLSRYFEPEIEECIAYVHRQWTEKGICWARNSQVEDIDDTAMGFRLLRLHGYEVSADVFRHFKSDGGEFFCFKGQSTQAVTGMYNLYRASQLMFPGENILVDAARFSANFLQLKRANNDLFDKWIITKDLPGEVGYALDVPWYASLPRVETRFYLDQYGGDDDVWIGKTLYRMPYVNNNKYLELAKLDYNNCQALHQQEWQNIQKWYRSCSLGEFGMTERSLLQTYYVAAASVFEPEKSQERLAWAKTAILMETITSHFEFQQLSRDQKRAFITEFEHDSILKYTNGGRYKRRSSLVGTLVRTLNHLSLDILLAHGRDIHQPLKNAWCKWLNSWEEGGDAELLVRTLNLMISGGGRRRRWASEELLSSNPKHEQLLKATIGVCDKLRLFQRRKVQGGNGCMNATGITTVEIESEMRELVKLVVTRSSSEDLDSEIKQNFLTIARSFYYAAYCNQGTINFHIAKVLFEKVL</sequence>